<reference key="1">
    <citation type="submission" date="2008-02" db="EMBL/GenBank/DDBJ databases">
        <title>Complete sequence of Yersinia pseudotuberculosis YPIII.</title>
        <authorList>
            <consortium name="US DOE Joint Genome Institute"/>
            <person name="Copeland A."/>
            <person name="Lucas S."/>
            <person name="Lapidus A."/>
            <person name="Glavina del Rio T."/>
            <person name="Dalin E."/>
            <person name="Tice H."/>
            <person name="Bruce D."/>
            <person name="Goodwin L."/>
            <person name="Pitluck S."/>
            <person name="Munk A.C."/>
            <person name="Brettin T."/>
            <person name="Detter J.C."/>
            <person name="Han C."/>
            <person name="Tapia R."/>
            <person name="Schmutz J."/>
            <person name="Larimer F."/>
            <person name="Land M."/>
            <person name="Hauser L."/>
            <person name="Challacombe J.F."/>
            <person name="Green L."/>
            <person name="Lindler L.E."/>
            <person name="Nikolich M.P."/>
            <person name="Richardson P."/>
        </authorList>
    </citation>
    <scope>NUCLEOTIDE SEQUENCE [LARGE SCALE GENOMIC DNA]</scope>
    <source>
        <strain>YPIII</strain>
    </source>
</reference>
<keyword id="KW-0067">ATP-binding</keyword>
<keyword id="KW-0963">Cytoplasm</keyword>
<keyword id="KW-0418">Kinase</keyword>
<keyword id="KW-0460">Magnesium</keyword>
<keyword id="KW-0479">Metal-binding</keyword>
<keyword id="KW-0547">Nucleotide-binding</keyword>
<keyword id="KW-0808">Transferase</keyword>
<comment type="function">
    <text evidence="1">Catalyzes the formation of acetyl phosphate from acetate and ATP. Can also catalyze the reverse reaction.</text>
</comment>
<comment type="catalytic activity">
    <reaction evidence="1">
        <text>acetate + ATP = acetyl phosphate + ADP</text>
        <dbReference type="Rhea" id="RHEA:11352"/>
        <dbReference type="ChEBI" id="CHEBI:22191"/>
        <dbReference type="ChEBI" id="CHEBI:30089"/>
        <dbReference type="ChEBI" id="CHEBI:30616"/>
        <dbReference type="ChEBI" id="CHEBI:456216"/>
        <dbReference type="EC" id="2.7.2.1"/>
    </reaction>
</comment>
<comment type="cofactor">
    <cofactor evidence="1">
        <name>Mg(2+)</name>
        <dbReference type="ChEBI" id="CHEBI:18420"/>
    </cofactor>
    <cofactor evidence="1">
        <name>Mn(2+)</name>
        <dbReference type="ChEBI" id="CHEBI:29035"/>
    </cofactor>
    <text evidence="1">Mg(2+). Can also accept Mn(2+).</text>
</comment>
<comment type="pathway">
    <text evidence="1">Metabolic intermediate biosynthesis; acetyl-CoA biosynthesis; acetyl-CoA from acetate: step 1/2.</text>
</comment>
<comment type="subunit">
    <text evidence="1">Homodimer.</text>
</comment>
<comment type="subcellular location">
    <subcellularLocation>
        <location evidence="1">Cytoplasm</location>
    </subcellularLocation>
</comment>
<comment type="similarity">
    <text evidence="1">Belongs to the acetokinase family.</text>
</comment>
<gene>
    <name evidence="1" type="primary">ackA</name>
    <name type="ordered locus">YPK_1551</name>
</gene>
<sequence length="400" mass="43004">MSSKLVLVLNCGSSSLKFAIIDATNGEEHISGLAECFHLPEARIKWKVDGGKQEAALGAGAAHSEALNFIVNTILAQKPALSAQLTAIGHRIVHGGEKFTSSVIVTDDVIQGIKDSIPFAPLHNPAHLIGIAEALKSFPNLADKNVAVFDTAFHQTMPEESYLYALPYSLYKDHGIRRYGAHGTSHFYVSQEAAKILNKPLEELNVITCHLGNGGSVTAVRNGKCVDTSMGLTPLEGLVMGTRSGDLDPAIIFHLHDAMGMSVDQINTLLTKESGLLGLTEVTSDCRYVEDNYATKADAKRAMDVFCHRLAKYIGSYTALMDGRLDAVVFTGGIGENAAMVRELTLDKLGLLGFEIDHERNMAARFGKSGTITKDSSRLALVIPTNEELVIAQDAARLTA</sequence>
<protein>
    <recommendedName>
        <fullName evidence="1">Acetate kinase</fullName>
        <ecNumber evidence="1">2.7.2.1</ecNumber>
    </recommendedName>
    <alternativeName>
        <fullName evidence="1">Acetokinase</fullName>
    </alternativeName>
</protein>
<name>ACKA_YERPY</name>
<accession>B1JGK4</accession>
<evidence type="ECO:0000255" key="1">
    <source>
        <dbReference type="HAMAP-Rule" id="MF_00020"/>
    </source>
</evidence>
<feature type="chain" id="PRO_1000090008" description="Acetate kinase">
    <location>
        <begin position="1"/>
        <end position="400"/>
    </location>
</feature>
<feature type="active site" description="Proton donor/acceptor" evidence="1">
    <location>
        <position position="150"/>
    </location>
</feature>
<feature type="binding site" evidence="1">
    <location>
        <position position="10"/>
    </location>
    <ligand>
        <name>Mg(2+)</name>
        <dbReference type="ChEBI" id="CHEBI:18420"/>
    </ligand>
</feature>
<feature type="binding site" evidence="1">
    <location>
        <position position="17"/>
    </location>
    <ligand>
        <name>ATP</name>
        <dbReference type="ChEBI" id="CHEBI:30616"/>
    </ligand>
</feature>
<feature type="binding site" evidence="1">
    <location>
        <position position="91"/>
    </location>
    <ligand>
        <name>substrate</name>
    </ligand>
</feature>
<feature type="binding site" evidence="1">
    <location>
        <begin position="210"/>
        <end position="214"/>
    </location>
    <ligand>
        <name>ATP</name>
        <dbReference type="ChEBI" id="CHEBI:30616"/>
    </ligand>
</feature>
<feature type="binding site" evidence="1">
    <location>
        <begin position="285"/>
        <end position="287"/>
    </location>
    <ligand>
        <name>ATP</name>
        <dbReference type="ChEBI" id="CHEBI:30616"/>
    </ligand>
</feature>
<feature type="binding site" evidence="1">
    <location>
        <begin position="333"/>
        <end position="337"/>
    </location>
    <ligand>
        <name>ATP</name>
        <dbReference type="ChEBI" id="CHEBI:30616"/>
    </ligand>
</feature>
<feature type="binding site" evidence="1">
    <location>
        <position position="387"/>
    </location>
    <ligand>
        <name>Mg(2+)</name>
        <dbReference type="ChEBI" id="CHEBI:18420"/>
    </ligand>
</feature>
<feature type="site" description="Transition state stabilizer" evidence="1">
    <location>
        <position position="182"/>
    </location>
</feature>
<feature type="site" description="Transition state stabilizer" evidence="1">
    <location>
        <position position="243"/>
    </location>
</feature>
<proteinExistence type="inferred from homology"/>
<dbReference type="EC" id="2.7.2.1" evidence="1"/>
<dbReference type="EMBL" id="CP000950">
    <property type="protein sequence ID" value="ACA67844.1"/>
    <property type="molecule type" value="Genomic_DNA"/>
</dbReference>
<dbReference type="RefSeq" id="WP_011192678.1">
    <property type="nucleotide sequence ID" value="NZ_CP009792.1"/>
</dbReference>
<dbReference type="SMR" id="B1JGK4"/>
<dbReference type="KEGG" id="ypy:YPK_1551"/>
<dbReference type="PATRIC" id="fig|502800.11.peg.2193"/>
<dbReference type="UniPathway" id="UPA00340">
    <property type="reaction ID" value="UER00458"/>
</dbReference>
<dbReference type="GO" id="GO:0005829">
    <property type="term" value="C:cytosol"/>
    <property type="evidence" value="ECO:0007669"/>
    <property type="project" value="TreeGrafter"/>
</dbReference>
<dbReference type="GO" id="GO:0008776">
    <property type="term" value="F:acetate kinase activity"/>
    <property type="evidence" value="ECO:0007669"/>
    <property type="project" value="UniProtKB-UniRule"/>
</dbReference>
<dbReference type="GO" id="GO:0005524">
    <property type="term" value="F:ATP binding"/>
    <property type="evidence" value="ECO:0007669"/>
    <property type="project" value="UniProtKB-KW"/>
</dbReference>
<dbReference type="GO" id="GO:0000287">
    <property type="term" value="F:magnesium ion binding"/>
    <property type="evidence" value="ECO:0007669"/>
    <property type="project" value="UniProtKB-UniRule"/>
</dbReference>
<dbReference type="GO" id="GO:0006083">
    <property type="term" value="P:acetate metabolic process"/>
    <property type="evidence" value="ECO:0007669"/>
    <property type="project" value="TreeGrafter"/>
</dbReference>
<dbReference type="GO" id="GO:0006085">
    <property type="term" value="P:acetyl-CoA biosynthetic process"/>
    <property type="evidence" value="ECO:0007669"/>
    <property type="project" value="UniProtKB-UniRule"/>
</dbReference>
<dbReference type="CDD" id="cd24010">
    <property type="entry name" value="ASKHA_NBD_AcK_PK"/>
    <property type="match status" value="1"/>
</dbReference>
<dbReference type="FunFam" id="3.30.420.40:FF:000041">
    <property type="entry name" value="Acetate kinase"/>
    <property type="match status" value="1"/>
</dbReference>
<dbReference type="FunFam" id="3.30.420.40:FF:000042">
    <property type="entry name" value="Acetate kinase"/>
    <property type="match status" value="1"/>
</dbReference>
<dbReference type="Gene3D" id="3.30.420.40">
    <property type="match status" value="2"/>
</dbReference>
<dbReference type="HAMAP" id="MF_00020">
    <property type="entry name" value="Acetate_kinase"/>
    <property type="match status" value="1"/>
</dbReference>
<dbReference type="InterPro" id="IPR004372">
    <property type="entry name" value="Ac/propionate_kinase"/>
</dbReference>
<dbReference type="InterPro" id="IPR000890">
    <property type="entry name" value="Aliphatic_acid_kin_short-chain"/>
</dbReference>
<dbReference type="InterPro" id="IPR023865">
    <property type="entry name" value="Aliphatic_acid_kinase_CS"/>
</dbReference>
<dbReference type="InterPro" id="IPR043129">
    <property type="entry name" value="ATPase_NBD"/>
</dbReference>
<dbReference type="NCBIfam" id="TIGR00016">
    <property type="entry name" value="ackA"/>
    <property type="match status" value="1"/>
</dbReference>
<dbReference type="PANTHER" id="PTHR21060">
    <property type="entry name" value="ACETATE KINASE"/>
    <property type="match status" value="1"/>
</dbReference>
<dbReference type="PANTHER" id="PTHR21060:SF21">
    <property type="entry name" value="ACETATE KINASE"/>
    <property type="match status" value="1"/>
</dbReference>
<dbReference type="Pfam" id="PF00871">
    <property type="entry name" value="Acetate_kinase"/>
    <property type="match status" value="1"/>
</dbReference>
<dbReference type="PIRSF" id="PIRSF000722">
    <property type="entry name" value="Acetate_prop_kin"/>
    <property type="match status" value="1"/>
</dbReference>
<dbReference type="PRINTS" id="PR00471">
    <property type="entry name" value="ACETATEKNASE"/>
</dbReference>
<dbReference type="SUPFAM" id="SSF53067">
    <property type="entry name" value="Actin-like ATPase domain"/>
    <property type="match status" value="2"/>
</dbReference>
<dbReference type="PROSITE" id="PS01075">
    <property type="entry name" value="ACETATE_KINASE_1"/>
    <property type="match status" value="1"/>
</dbReference>
<dbReference type="PROSITE" id="PS01076">
    <property type="entry name" value="ACETATE_KINASE_2"/>
    <property type="match status" value="1"/>
</dbReference>
<organism>
    <name type="scientific">Yersinia pseudotuberculosis serotype O:3 (strain YPIII)</name>
    <dbReference type="NCBI Taxonomy" id="502800"/>
    <lineage>
        <taxon>Bacteria</taxon>
        <taxon>Pseudomonadati</taxon>
        <taxon>Pseudomonadota</taxon>
        <taxon>Gammaproteobacteria</taxon>
        <taxon>Enterobacterales</taxon>
        <taxon>Yersiniaceae</taxon>
        <taxon>Yersinia</taxon>
    </lineage>
</organism>